<comment type="function">
    <text evidence="1">Essential cell division protein that forms a contractile ring structure (Z ring) at the future cell division site. The regulation of the ring assembly controls the timing and the location of cell division. One of the functions of the FtsZ ring is to recruit other cell division proteins to the septum to produce a new cell wall between the dividing cells. Binds GTP and shows GTPase activity.</text>
</comment>
<comment type="subunit">
    <text evidence="1">Homodimer. Polymerizes to form a dynamic ring structure in a strictly GTP-dependent manner. Interacts directly with several other division proteins.</text>
</comment>
<comment type="subcellular location">
    <subcellularLocation>
        <location evidence="1">Cytoplasm</location>
    </subcellularLocation>
    <text evidence="1">Assembles at midcell at the inner surface of the cytoplasmic membrane.</text>
</comment>
<comment type="similarity">
    <text evidence="1">Belongs to the FtsZ family.</text>
</comment>
<accession>Q9V2S0</accession>
<accession>G8ZFH9</accession>
<sequence>MLKLVENVVERVSAEEQKPQEIQVPQSSIDEELKKIVEQIKARIYVVGVGGAGCNTVNRMMEVGVTGAKIIAVNTDAQDLLKIKAHQKILIGKELTRGLGAGNDPKIGEEAAKESERELREALEGADMVFVTCGLGGGTGTGAAPVIAEMAKKMGALTVSVVTLPFTMEGIRRAKNAEYGLKRLAKASDTVIVIPNDKLLEVAPKLPIQMAFKVADEILVQAVKGITELITKPGLVNLDFNDVRAVMKDGGVAMIGIGESDSEKRALEAAEQALNSPLLDVDISGAKGALISISGADVKLEEAQQIIEYVTRNVDPKAQVIWGIQLEPELEKTIRVMVIVTGVTSRYITFQEETPEPSEEEVPPVKIDIPEL</sequence>
<feature type="chain" id="PRO_0000114404" description="Cell division protein FtsZ 1">
    <location>
        <begin position="1"/>
        <end position="372"/>
    </location>
</feature>
<feature type="region of interest" description="Disordered" evidence="2">
    <location>
        <begin position="351"/>
        <end position="372"/>
    </location>
</feature>
<feature type="compositionally biased region" description="Acidic residues" evidence="2">
    <location>
        <begin position="353"/>
        <end position="362"/>
    </location>
</feature>
<feature type="binding site" evidence="1">
    <location>
        <begin position="51"/>
        <end position="55"/>
    </location>
    <ligand>
        <name>GTP</name>
        <dbReference type="ChEBI" id="CHEBI:37565"/>
    </ligand>
</feature>
<feature type="binding site" evidence="1">
    <location>
        <begin position="138"/>
        <end position="140"/>
    </location>
    <ligand>
        <name>GTP</name>
        <dbReference type="ChEBI" id="CHEBI:37565"/>
    </ligand>
</feature>
<feature type="binding site" evidence="1">
    <location>
        <position position="169"/>
    </location>
    <ligand>
        <name>GTP</name>
        <dbReference type="ChEBI" id="CHEBI:37565"/>
    </ligand>
</feature>
<feature type="binding site" evidence="1">
    <location>
        <position position="173"/>
    </location>
    <ligand>
        <name>GTP</name>
        <dbReference type="ChEBI" id="CHEBI:37565"/>
    </ligand>
</feature>
<feature type="binding site" evidence="1">
    <location>
        <position position="216"/>
    </location>
    <ligand>
        <name>GTP</name>
        <dbReference type="ChEBI" id="CHEBI:37565"/>
    </ligand>
</feature>
<reference key="1">
    <citation type="journal article" date="2003" name="Mol. Microbiol.">
        <title>An integrated analysis of the genome of the hyperthermophilic archaeon Pyrococcus abyssi.</title>
        <authorList>
            <person name="Cohen G.N."/>
            <person name="Barbe V."/>
            <person name="Flament D."/>
            <person name="Galperin M."/>
            <person name="Heilig R."/>
            <person name="Lecompte O."/>
            <person name="Poch O."/>
            <person name="Prieur D."/>
            <person name="Querellou J."/>
            <person name="Ripp R."/>
            <person name="Thierry J.-C."/>
            <person name="Van der Oost J."/>
            <person name="Weissenbach J."/>
            <person name="Zivanovic Y."/>
            <person name="Forterre P."/>
        </authorList>
    </citation>
    <scope>NUCLEOTIDE SEQUENCE [LARGE SCALE GENOMIC DNA]</scope>
    <source>
        <strain>GE5 / Orsay</strain>
    </source>
</reference>
<reference key="2">
    <citation type="journal article" date="2012" name="Curr. Microbiol.">
        <title>Re-annotation of two hyperthermophilic archaea Pyrococcus abyssi GE5 and Pyrococcus furiosus DSM 3638.</title>
        <authorList>
            <person name="Gao J."/>
            <person name="Wang J."/>
        </authorList>
    </citation>
    <scope>GENOME REANNOTATION</scope>
    <source>
        <strain>GE5 / Orsay</strain>
    </source>
</reference>
<dbReference type="EMBL" id="AJ248283">
    <property type="protein sequence ID" value="CAB48928.1"/>
    <property type="molecule type" value="Genomic_DNA"/>
</dbReference>
<dbReference type="EMBL" id="HE613800">
    <property type="protein sequence ID" value="CCE69370.1"/>
    <property type="molecule type" value="Genomic_DNA"/>
</dbReference>
<dbReference type="PIR" id="A75185">
    <property type="entry name" value="A75185"/>
</dbReference>
<dbReference type="RefSeq" id="WP_010867128.1">
    <property type="nucleotide sequence ID" value="NC_000868.1"/>
</dbReference>
<dbReference type="SMR" id="Q9V2S0"/>
<dbReference type="STRING" id="272844.PAB2351"/>
<dbReference type="KEGG" id="pab:PAB2351"/>
<dbReference type="PATRIC" id="fig|272844.11.peg.4"/>
<dbReference type="eggNOG" id="arCOG02201">
    <property type="taxonomic scope" value="Archaea"/>
</dbReference>
<dbReference type="HOGENOM" id="CLU_024865_0_1_2"/>
<dbReference type="OrthoDB" id="371908at2157"/>
<dbReference type="PhylomeDB" id="Q9V2S0"/>
<dbReference type="Proteomes" id="UP000000810">
    <property type="component" value="Chromosome"/>
</dbReference>
<dbReference type="Proteomes" id="UP000009139">
    <property type="component" value="Chromosome"/>
</dbReference>
<dbReference type="GO" id="GO:0032153">
    <property type="term" value="C:cell division site"/>
    <property type="evidence" value="ECO:0007669"/>
    <property type="project" value="UniProtKB-UniRule"/>
</dbReference>
<dbReference type="GO" id="GO:0005737">
    <property type="term" value="C:cytoplasm"/>
    <property type="evidence" value="ECO:0007669"/>
    <property type="project" value="UniProtKB-SubCell"/>
</dbReference>
<dbReference type="GO" id="GO:0005525">
    <property type="term" value="F:GTP binding"/>
    <property type="evidence" value="ECO:0007669"/>
    <property type="project" value="UniProtKB-UniRule"/>
</dbReference>
<dbReference type="GO" id="GO:0003924">
    <property type="term" value="F:GTPase activity"/>
    <property type="evidence" value="ECO:0007669"/>
    <property type="project" value="UniProtKB-UniRule"/>
</dbReference>
<dbReference type="GO" id="GO:0043093">
    <property type="term" value="P:FtsZ-dependent cytokinesis"/>
    <property type="evidence" value="ECO:0007669"/>
    <property type="project" value="UniProtKB-UniRule"/>
</dbReference>
<dbReference type="GO" id="GO:0051258">
    <property type="term" value="P:protein polymerization"/>
    <property type="evidence" value="ECO:0007669"/>
    <property type="project" value="UniProtKB-UniRule"/>
</dbReference>
<dbReference type="CDD" id="cd02201">
    <property type="entry name" value="FtsZ_type1"/>
    <property type="match status" value="1"/>
</dbReference>
<dbReference type="FunFam" id="3.40.50.1440:FF:000023">
    <property type="entry name" value="Cell division protein FtsZ"/>
    <property type="match status" value="1"/>
</dbReference>
<dbReference type="Gene3D" id="3.30.1330.20">
    <property type="entry name" value="Tubulin/FtsZ, C-terminal domain"/>
    <property type="match status" value="1"/>
</dbReference>
<dbReference type="Gene3D" id="3.40.50.1440">
    <property type="entry name" value="Tubulin/FtsZ, GTPase domain"/>
    <property type="match status" value="1"/>
</dbReference>
<dbReference type="HAMAP" id="MF_00909">
    <property type="entry name" value="FtsZ"/>
    <property type="match status" value="1"/>
</dbReference>
<dbReference type="InterPro" id="IPR000158">
    <property type="entry name" value="Cell_div_FtsZ"/>
</dbReference>
<dbReference type="InterPro" id="IPR020805">
    <property type="entry name" value="Cell_div_FtsZ_CS"/>
</dbReference>
<dbReference type="InterPro" id="IPR045061">
    <property type="entry name" value="FtsZ/CetZ"/>
</dbReference>
<dbReference type="InterPro" id="IPR024757">
    <property type="entry name" value="FtsZ_C"/>
</dbReference>
<dbReference type="InterPro" id="IPR008280">
    <property type="entry name" value="Tub_FtsZ_C"/>
</dbReference>
<dbReference type="InterPro" id="IPR037103">
    <property type="entry name" value="Tubulin/FtsZ-like_C"/>
</dbReference>
<dbReference type="InterPro" id="IPR018316">
    <property type="entry name" value="Tubulin/FtsZ_2-layer-sand-dom"/>
</dbReference>
<dbReference type="InterPro" id="IPR036525">
    <property type="entry name" value="Tubulin/FtsZ_GTPase_sf"/>
</dbReference>
<dbReference type="InterPro" id="IPR003008">
    <property type="entry name" value="Tubulin_FtsZ_GTPase"/>
</dbReference>
<dbReference type="NCBIfam" id="TIGR00065">
    <property type="entry name" value="ftsZ"/>
    <property type="match status" value="1"/>
</dbReference>
<dbReference type="PANTHER" id="PTHR30314">
    <property type="entry name" value="CELL DIVISION PROTEIN FTSZ-RELATED"/>
    <property type="match status" value="1"/>
</dbReference>
<dbReference type="PANTHER" id="PTHR30314:SF3">
    <property type="entry name" value="MITOCHONDRIAL DIVISION PROTEIN FSZA"/>
    <property type="match status" value="1"/>
</dbReference>
<dbReference type="Pfam" id="PF12327">
    <property type="entry name" value="FtsZ_C"/>
    <property type="match status" value="1"/>
</dbReference>
<dbReference type="Pfam" id="PF00091">
    <property type="entry name" value="Tubulin"/>
    <property type="match status" value="1"/>
</dbReference>
<dbReference type="PRINTS" id="PR00423">
    <property type="entry name" value="CELLDVISFTSZ"/>
</dbReference>
<dbReference type="SMART" id="SM00864">
    <property type="entry name" value="Tubulin"/>
    <property type="match status" value="1"/>
</dbReference>
<dbReference type="SMART" id="SM00865">
    <property type="entry name" value="Tubulin_C"/>
    <property type="match status" value="1"/>
</dbReference>
<dbReference type="SUPFAM" id="SSF55307">
    <property type="entry name" value="Tubulin C-terminal domain-like"/>
    <property type="match status" value="1"/>
</dbReference>
<dbReference type="SUPFAM" id="SSF52490">
    <property type="entry name" value="Tubulin nucleotide-binding domain-like"/>
    <property type="match status" value="1"/>
</dbReference>
<dbReference type="PROSITE" id="PS01134">
    <property type="entry name" value="FTSZ_1"/>
    <property type="match status" value="1"/>
</dbReference>
<dbReference type="PROSITE" id="PS01135">
    <property type="entry name" value="FTSZ_2"/>
    <property type="match status" value="1"/>
</dbReference>
<gene>
    <name evidence="1" type="primary">ftsZ1</name>
    <name type="synonym">ftsZ-1</name>
    <name type="ordered locus">PYRAB00050</name>
    <name type="ORF">PAB2351</name>
</gene>
<organism>
    <name type="scientific">Pyrococcus abyssi (strain GE5 / Orsay)</name>
    <dbReference type="NCBI Taxonomy" id="272844"/>
    <lineage>
        <taxon>Archaea</taxon>
        <taxon>Methanobacteriati</taxon>
        <taxon>Methanobacteriota</taxon>
        <taxon>Thermococci</taxon>
        <taxon>Thermococcales</taxon>
        <taxon>Thermococcaceae</taxon>
        <taxon>Pyrococcus</taxon>
    </lineage>
</organism>
<name>FTSZ1_PYRAB</name>
<protein>
    <recommendedName>
        <fullName evidence="1">Cell division protein FtsZ 1</fullName>
    </recommendedName>
</protein>
<proteinExistence type="inferred from homology"/>
<evidence type="ECO:0000255" key="1">
    <source>
        <dbReference type="HAMAP-Rule" id="MF_00909"/>
    </source>
</evidence>
<evidence type="ECO:0000256" key="2">
    <source>
        <dbReference type="SAM" id="MobiDB-lite"/>
    </source>
</evidence>
<keyword id="KW-0131">Cell cycle</keyword>
<keyword id="KW-0132">Cell division</keyword>
<keyword id="KW-0963">Cytoplasm</keyword>
<keyword id="KW-0342">GTP-binding</keyword>
<keyword id="KW-0547">Nucleotide-binding</keyword>
<keyword id="KW-0717">Septation</keyword>